<dbReference type="EMBL" id="CP001191">
    <property type="protein sequence ID" value="ACI56116.1"/>
    <property type="molecule type" value="Genomic_DNA"/>
</dbReference>
<dbReference type="RefSeq" id="WP_012558554.1">
    <property type="nucleotide sequence ID" value="NC_011369.1"/>
</dbReference>
<dbReference type="SMR" id="B5ZYX3"/>
<dbReference type="STRING" id="395492.Rleg2_2846"/>
<dbReference type="KEGG" id="rlt:Rleg2_2846"/>
<dbReference type="eggNOG" id="COG1160">
    <property type="taxonomic scope" value="Bacteria"/>
</dbReference>
<dbReference type="HOGENOM" id="CLU_016077_5_0_5"/>
<dbReference type="Proteomes" id="UP000008330">
    <property type="component" value="Chromosome"/>
</dbReference>
<dbReference type="GO" id="GO:0005525">
    <property type="term" value="F:GTP binding"/>
    <property type="evidence" value="ECO:0007669"/>
    <property type="project" value="UniProtKB-UniRule"/>
</dbReference>
<dbReference type="GO" id="GO:0042254">
    <property type="term" value="P:ribosome biogenesis"/>
    <property type="evidence" value="ECO:0007669"/>
    <property type="project" value="UniProtKB-KW"/>
</dbReference>
<dbReference type="CDD" id="cd01894">
    <property type="entry name" value="EngA1"/>
    <property type="match status" value="1"/>
</dbReference>
<dbReference type="CDD" id="cd01895">
    <property type="entry name" value="EngA2"/>
    <property type="match status" value="1"/>
</dbReference>
<dbReference type="FunFam" id="3.30.300.20:FF:000004">
    <property type="entry name" value="GTPase Der"/>
    <property type="match status" value="1"/>
</dbReference>
<dbReference type="FunFam" id="3.40.50.300:FF:000057">
    <property type="entry name" value="GTPase Der"/>
    <property type="match status" value="1"/>
</dbReference>
<dbReference type="Gene3D" id="3.30.300.20">
    <property type="match status" value="1"/>
</dbReference>
<dbReference type="Gene3D" id="3.40.50.300">
    <property type="entry name" value="P-loop containing nucleotide triphosphate hydrolases"/>
    <property type="match status" value="2"/>
</dbReference>
<dbReference type="HAMAP" id="MF_00195">
    <property type="entry name" value="GTPase_Der"/>
    <property type="match status" value="1"/>
</dbReference>
<dbReference type="InterPro" id="IPR031166">
    <property type="entry name" value="G_ENGA"/>
</dbReference>
<dbReference type="InterPro" id="IPR006073">
    <property type="entry name" value="GTP-bd"/>
</dbReference>
<dbReference type="InterPro" id="IPR016484">
    <property type="entry name" value="GTPase_Der"/>
</dbReference>
<dbReference type="InterPro" id="IPR032859">
    <property type="entry name" value="KH_dom-like"/>
</dbReference>
<dbReference type="InterPro" id="IPR015946">
    <property type="entry name" value="KH_dom-like_a/b"/>
</dbReference>
<dbReference type="InterPro" id="IPR027417">
    <property type="entry name" value="P-loop_NTPase"/>
</dbReference>
<dbReference type="InterPro" id="IPR005225">
    <property type="entry name" value="Small_GTP-bd"/>
</dbReference>
<dbReference type="NCBIfam" id="TIGR03594">
    <property type="entry name" value="GTPase_EngA"/>
    <property type="match status" value="1"/>
</dbReference>
<dbReference type="NCBIfam" id="TIGR00231">
    <property type="entry name" value="small_GTP"/>
    <property type="match status" value="2"/>
</dbReference>
<dbReference type="PANTHER" id="PTHR43834">
    <property type="entry name" value="GTPASE DER"/>
    <property type="match status" value="1"/>
</dbReference>
<dbReference type="PANTHER" id="PTHR43834:SF6">
    <property type="entry name" value="GTPASE DER"/>
    <property type="match status" value="1"/>
</dbReference>
<dbReference type="Pfam" id="PF14714">
    <property type="entry name" value="KH_dom-like"/>
    <property type="match status" value="1"/>
</dbReference>
<dbReference type="Pfam" id="PF01926">
    <property type="entry name" value="MMR_HSR1"/>
    <property type="match status" value="2"/>
</dbReference>
<dbReference type="PIRSF" id="PIRSF006485">
    <property type="entry name" value="GTP-binding_EngA"/>
    <property type="match status" value="1"/>
</dbReference>
<dbReference type="PRINTS" id="PR00326">
    <property type="entry name" value="GTP1OBG"/>
</dbReference>
<dbReference type="SUPFAM" id="SSF52540">
    <property type="entry name" value="P-loop containing nucleoside triphosphate hydrolases"/>
    <property type="match status" value="2"/>
</dbReference>
<dbReference type="PROSITE" id="PS51712">
    <property type="entry name" value="G_ENGA"/>
    <property type="match status" value="2"/>
</dbReference>
<sequence length="473" mass="52602">MSFTVAIVGRPNVGKSTLFNRLVGKKLALVDDTPGVTRDRRPGDARLMGLTFTIIDTAGLEEADEESLQGRMRAQTEAAIDEADLSLFVVDAKNGLTPVDTALAEMLRRRGKPVVLVANKSEARGSDSGFYDAYTLGLGEPTPISAEHGEGMLDLRDAIVEAIGKDRAYAKEDVAVTNVDISEAAGEGEDEDEEPLYDDTKPLRVAIVGRPNAGKSTLINRFLGEDRLLTGPEAGITRDSISVEWDWRGRTIKMFDTAGMRRKARVTEKLEKLSVADALRAIRFAETVVIVFDATIPFEKQDLQIVDLVLREGRAAVLAFNKWDMIEDRQAVLADLREKTDRLLPQARGIRAVPISGQTGWGLDKLMQSIIDTDRVWNKRISTAKLNRWLETQQIQHPPPAVSGRRIKLKYMTQVKARPPAFMISCTRSDALPESYTRYLINGLRADFDMPSVPIRIHFRSAENPFEGKKRRT</sequence>
<keyword id="KW-0342">GTP-binding</keyword>
<keyword id="KW-0547">Nucleotide-binding</keyword>
<keyword id="KW-1185">Reference proteome</keyword>
<keyword id="KW-0677">Repeat</keyword>
<keyword id="KW-0690">Ribosome biogenesis</keyword>
<comment type="function">
    <text evidence="1">GTPase that plays an essential role in the late steps of ribosome biogenesis.</text>
</comment>
<comment type="subunit">
    <text evidence="1">Associates with the 50S ribosomal subunit.</text>
</comment>
<comment type="similarity">
    <text evidence="1">Belongs to the TRAFAC class TrmE-Era-EngA-EngB-Septin-like GTPase superfamily. EngA (Der) GTPase family.</text>
</comment>
<proteinExistence type="inferred from homology"/>
<reference key="1">
    <citation type="journal article" date="2010" name="Stand. Genomic Sci.">
        <title>Complete genome sequence of Rhizobium leguminosarum bv trifolii strain WSM2304, an effective microsymbiont of the South American clover Trifolium polymorphum.</title>
        <authorList>
            <person name="Reeve W."/>
            <person name="O'Hara G."/>
            <person name="Chain P."/>
            <person name="Ardley J."/>
            <person name="Brau L."/>
            <person name="Nandesena K."/>
            <person name="Tiwari R."/>
            <person name="Malfatti S."/>
            <person name="Kiss H."/>
            <person name="Lapidus A."/>
            <person name="Copeland A."/>
            <person name="Nolan M."/>
            <person name="Land M."/>
            <person name="Ivanova N."/>
            <person name="Mavromatis K."/>
            <person name="Markowitz V."/>
            <person name="Kyrpides N."/>
            <person name="Melino V."/>
            <person name="Denton M."/>
            <person name="Yates R."/>
            <person name="Howieson J."/>
        </authorList>
    </citation>
    <scope>NUCLEOTIDE SEQUENCE [LARGE SCALE GENOMIC DNA]</scope>
    <source>
        <strain>WSM2304</strain>
    </source>
</reference>
<organism>
    <name type="scientific">Rhizobium leguminosarum bv. trifolii (strain WSM2304)</name>
    <dbReference type="NCBI Taxonomy" id="395492"/>
    <lineage>
        <taxon>Bacteria</taxon>
        <taxon>Pseudomonadati</taxon>
        <taxon>Pseudomonadota</taxon>
        <taxon>Alphaproteobacteria</taxon>
        <taxon>Hyphomicrobiales</taxon>
        <taxon>Rhizobiaceae</taxon>
        <taxon>Rhizobium/Agrobacterium group</taxon>
        <taxon>Rhizobium</taxon>
    </lineage>
</organism>
<name>DER_RHILW</name>
<accession>B5ZYX3</accession>
<feature type="chain" id="PRO_1000099154" description="GTPase Der">
    <location>
        <begin position="1"/>
        <end position="473"/>
    </location>
</feature>
<feature type="domain" description="EngA-type G 1">
    <location>
        <begin position="3"/>
        <end position="167"/>
    </location>
</feature>
<feature type="domain" description="EngA-type G 2">
    <location>
        <begin position="203"/>
        <end position="378"/>
    </location>
</feature>
<feature type="domain" description="KH-like" evidence="1">
    <location>
        <begin position="379"/>
        <end position="463"/>
    </location>
</feature>
<feature type="binding site" evidence="1">
    <location>
        <begin position="9"/>
        <end position="16"/>
    </location>
    <ligand>
        <name>GTP</name>
        <dbReference type="ChEBI" id="CHEBI:37565"/>
        <label>1</label>
    </ligand>
</feature>
<feature type="binding site" evidence="1">
    <location>
        <begin position="56"/>
        <end position="60"/>
    </location>
    <ligand>
        <name>GTP</name>
        <dbReference type="ChEBI" id="CHEBI:37565"/>
        <label>1</label>
    </ligand>
</feature>
<feature type="binding site" evidence="1">
    <location>
        <begin position="119"/>
        <end position="122"/>
    </location>
    <ligand>
        <name>GTP</name>
        <dbReference type="ChEBI" id="CHEBI:37565"/>
        <label>1</label>
    </ligand>
</feature>
<feature type="binding site" evidence="1">
    <location>
        <begin position="209"/>
        <end position="216"/>
    </location>
    <ligand>
        <name>GTP</name>
        <dbReference type="ChEBI" id="CHEBI:37565"/>
        <label>2</label>
    </ligand>
</feature>
<feature type="binding site" evidence="1">
    <location>
        <begin position="256"/>
        <end position="260"/>
    </location>
    <ligand>
        <name>GTP</name>
        <dbReference type="ChEBI" id="CHEBI:37565"/>
        <label>2</label>
    </ligand>
</feature>
<feature type="binding site" evidence="1">
    <location>
        <begin position="321"/>
        <end position="324"/>
    </location>
    <ligand>
        <name>GTP</name>
        <dbReference type="ChEBI" id="CHEBI:37565"/>
        <label>2</label>
    </ligand>
</feature>
<protein>
    <recommendedName>
        <fullName evidence="1">GTPase Der</fullName>
    </recommendedName>
    <alternativeName>
        <fullName evidence="1">GTP-binding protein EngA</fullName>
    </alternativeName>
</protein>
<gene>
    <name evidence="1" type="primary">der</name>
    <name type="synonym">engA</name>
    <name type="ordered locus">Rleg2_2846</name>
</gene>
<evidence type="ECO:0000255" key="1">
    <source>
        <dbReference type="HAMAP-Rule" id="MF_00195"/>
    </source>
</evidence>